<organism>
    <name type="scientific">Chironomus thummi thummi</name>
    <name type="common">Midge</name>
    <dbReference type="NCBI Taxonomy" id="7155"/>
    <lineage>
        <taxon>Eukaryota</taxon>
        <taxon>Metazoa</taxon>
        <taxon>Ecdysozoa</taxon>
        <taxon>Arthropoda</taxon>
        <taxon>Hexapoda</taxon>
        <taxon>Insecta</taxon>
        <taxon>Pterygota</taxon>
        <taxon>Neoptera</taxon>
        <taxon>Endopterygota</taxon>
        <taxon>Diptera</taxon>
        <taxon>Nematocera</taxon>
        <taxon>Chironomoidea</taxon>
        <taxon>Chironomidae</taxon>
        <taxon>Chironominae</taxon>
        <taxon>Chironomus</taxon>
    </lineage>
</organism>
<feature type="initiator methionine" description="Removed" evidence="1">
    <location>
        <position position="1"/>
    </location>
</feature>
<feature type="chain" id="PRO_0000055216" description="Histone H2A">
    <location>
        <begin position="2"/>
        <end position="125"/>
    </location>
</feature>
<feature type="region of interest" description="Disordered" evidence="2">
    <location>
        <begin position="1"/>
        <end position="21"/>
    </location>
</feature>
<feature type="compositionally biased region" description="Basic residues" evidence="2">
    <location>
        <begin position="1"/>
        <end position="18"/>
    </location>
</feature>
<feature type="modified residue" description="N-acetylserine" evidence="1">
    <location>
        <position position="2"/>
    </location>
</feature>
<feature type="modified residue" description="Phosphoserine" evidence="1">
    <location>
        <position position="2"/>
    </location>
</feature>
<feature type="cross-link" description="Glycyl lysine isopeptide (Lys-Gly) (interchain with G-Cter in ubiquitin)" evidence="1">
    <location>
        <position position="119"/>
    </location>
</feature>
<proteinExistence type="inferred from homology"/>
<protein>
    <recommendedName>
        <fullName>Histone H2A</fullName>
    </recommendedName>
</protein>
<comment type="function">
    <text>Core component of nucleosome. Nucleosomes wrap and compact DNA into chromatin, limiting DNA accessibility to the cellular machineries which require DNA as a template. Histones thereby play a central role in transcription regulation, DNA repair, DNA replication and chromosomal stability. DNA accessibility is regulated via a complex set of post-translational modifications of histones, also called histone code, and nucleosome remodeling.</text>
</comment>
<comment type="subunit">
    <text>The nucleosome is a histone octamer containing two molecules each of H2A, H2B, H3 and H4 assembled in one H3-H4 heterotetramer and two H2A-H2B heterodimers. The octamer wraps approximately 147 bp of DNA.</text>
</comment>
<comment type="subcellular location">
    <subcellularLocation>
        <location>Nucleus</location>
    </subcellularLocation>
    <subcellularLocation>
        <location>Chromosome</location>
    </subcellularLocation>
</comment>
<comment type="PTM">
    <text evidence="1">Monoubiquitination of Lys-119 gives a specific tag for epigenetic transcriptional repression.</text>
</comment>
<comment type="PTM">
    <text evidence="1">Phosphorylation on Ser-2 is enhanced during mitosis. Phosphorylation on Ser-2 directly represses transcription (By similarity).</text>
</comment>
<comment type="similarity">
    <text evidence="3">Belongs to the histone H2A family.</text>
</comment>
<name>H2A_CHITH</name>
<keyword id="KW-0007">Acetylation</keyword>
<keyword id="KW-0158">Chromosome</keyword>
<keyword id="KW-0238">DNA-binding</keyword>
<keyword id="KW-1017">Isopeptide bond</keyword>
<keyword id="KW-0544">Nucleosome core</keyword>
<keyword id="KW-0539">Nucleus</keyword>
<keyword id="KW-0597">Phosphoprotein</keyword>
<keyword id="KW-0832">Ubl conjugation</keyword>
<reference key="1">
    <citation type="journal article" date="1990" name="J. Mol. Biol.">
        <title>New foldback transposable element TFB1 found in histone genes of the midge Chironomus thummi.</title>
        <authorList>
            <person name="Hankeln T."/>
            <person name="Schmidt E.R."/>
        </authorList>
    </citation>
    <scope>NUCLEOTIDE SEQUENCE [GENOMIC DNA]</scope>
</reference>
<reference key="2">
    <citation type="journal article" date="1991" name="Chromosoma">
        <title>The organization, localization and nucleotide sequence of the histone genes of the midge Chironomus thummi.</title>
        <authorList>
            <person name="Hankeln T."/>
            <person name="Schmidt E.R."/>
        </authorList>
    </citation>
    <scope>NUCLEOTIDE SEQUENCE [GENOMIC DNA]</scope>
</reference>
<dbReference type="EMBL" id="X56335">
    <property type="protein sequence ID" value="CAA39773.1"/>
    <property type="molecule type" value="Genomic_DNA"/>
</dbReference>
<dbReference type="PIR" id="C56580">
    <property type="entry name" value="C56580"/>
</dbReference>
<dbReference type="SMR" id="P21896"/>
<dbReference type="GO" id="GO:0000786">
    <property type="term" value="C:nucleosome"/>
    <property type="evidence" value="ECO:0007669"/>
    <property type="project" value="UniProtKB-KW"/>
</dbReference>
<dbReference type="GO" id="GO:0005634">
    <property type="term" value="C:nucleus"/>
    <property type="evidence" value="ECO:0007669"/>
    <property type="project" value="UniProtKB-SubCell"/>
</dbReference>
<dbReference type="GO" id="GO:0003677">
    <property type="term" value="F:DNA binding"/>
    <property type="evidence" value="ECO:0007669"/>
    <property type="project" value="UniProtKB-KW"/>
</dbReference>
<dbReference type="GO" id="GO:0046982">
    <property type="term" value="F:protein heterodimerization activity"/>
    <property type="evidence" value="ECO:0007669"/>
    <property type="project" value="InterPro"/>
</dbReference>
<dbReference type="GO" id="GO:0030527">
    <property type="term" value="F:structural constituent of chromatin"/>
    <property type="evidence" value="ECO:0007669"/>
    <property type="project" value="InterPro"/>
</dbReference>
<dbReference type="CDD" id="cd00074">
    <property type="entry name" value="HFD_H2A"/>
    <property type="match status" value="1"/>
</dbReference>
<dbReference type="FunFam" id="1.10.20.10:FF:000020">
    <property type="entry name" value="Histone H2A"/>
    <property type="match status" value="1"/>
</dbReference>
<dbReference type="Gene3D" id="1.10.20.10">
    <property type="entry name" value="Histone, subunit A"/>
    <property type="match status" value="1"/>
</dbReference>
<dbReference type="InterPro" id="IPR009072">
    <property type="entry name" value="Histone-fold"/>
</dbReference>
<dbReference type="InterPro" id="IPR002119">
    <property type="entry name" value="Histone_H2A"/>
</dbReference>
<dbReference type="InterPro" id="IPR007125">
    <property type="entry name" value="Histone_H2A/H2B/H3"/>
</dbReference>
<dbReference type="InterPro" id="IPR032454">
    <property type="entry name" value="Histone_H2A_C"/>
</dbReference>
<dbReference type="InterPro" id="IPR032458">
    <property type="entry name" value="Histone_H2A_CS"/>
</dbReference>
<dbReference type="PANTHER" id="PTHR23430">
    <property type="entry name" value="HISTONE H2A"/>
    <property type="match status" value="1"/>
</dbReference>
<dbReference type="Pfam" id="PF00125">
    <property type="entry name" value="Histone"/>
    <property type="match status" value="1"/>
</dbReference>
<dbReference type="Pfam" id="PF16211">
    <property type="entry name" value="Histone_H2A_C"/>
    <property type="match status" value="1"/>
</dbReference>
<dbReference type="PRINTS" id="PR00620">
    <property type="entry name" value="HISTONEH2A"/>
</dbReference>
<dbReference type="SMART" id="SM00414">
    <property type="entry name" value="H2A"/>
    <property type="match status" value="1"/>
</dbReference>
<dbReference type="SUPFAM" id="SSF47113">
    <property type="entry name" value="Histone-fold"/>
    <property type="match status" value="1"/>
</dbReference>
<dbReference type="PROSITE" id="PS00046">
    <property type="entry name" value="HISTONE_H2A"/>
    <property type="match status" value="1"/>
</dbReference>
<sequence length="125" mass="13423">MSGRGKGGKVKAKAKSRSSRAGLQFPVGRIHRLLRKGNYGERVGAGAPVYLAAVMEYLAAEVLELAGNAARDNKKTRIIPRHLQLAIRNDEELNKLLSGVTIAQGGVLPNIQAVLLPKKTESKKA</sequence>
<accession>P21896</accession>
<evidence type="ECO:0000250" key="1"/>
<evidence type="ECO:0000256" key="2">
    <source>
        <dbReference type="SAM" id="MobiDB-lite"/>
    </source>
</evidence>
<evidence type="ECO:0000305" key="3"/>